<reference key="1">
    <citation type="journal article" date="2000" name="Proc. Natl. Acad. Sci. U.S.A.">
        <title>Genome sequence of Halobacterium species NRC-1.</title>
        <authorList>
            <person name="Ng W.V."/>
            <person name="Kennedy S.P."/>
            <person name="Mahairas G.G."/>
            <person name="Berquist B."/>
            <person name="Pan M."/>
            <person name="Shukla H.D."/>
            <person name="Lasky S.R."/>
            <person name="Baliga N.S."/>
            <person name="Thorsson V."/>
            <person name="Sbrogna J."/>
            <person name="Swartzell S."/>
            <person name="Weir D."/>
            <person name="Hall J."/>
            <person name="Dahl T.A."/>
            <person name="Welti R."/>
            <person name="Goo Y.A."/>
            <person name="Leithauser B."/>
            <person name="Keller K."/>
            <person name="Cruz R."/>
            <person name="Danson M.J."/>
            <person name="Hough D.W."/>
            <person name="Maddocks D.G."/>
            <person name="Jablonski P.E."/>
            <person name="Krebs M.P."/>
            <person name="Angevine C.M."/>
            <person name="Dale H."/>
            <person name="Isenbarger T.A."/>
            <person name="Peck R.F."/>
            <person name="Pohlschroder M."/>
            <person name="Spudich J.L."/>
            <person name="Jung K.-H."/>
            <person name="Alam M."/>
            <person name="Freitas T."/>
            <person name="Hou S."/>
            <person name="Daniels C.J."/>
            <person name="Dennis P.P."/>
            <person name="Omer A.D."/>
            <person name="Ebhardt H."/>
            <person name="Lowe T.M."/>
            <person name="Liang P."/>
            <person name="Riley M."/>
            <person name="Hood L."/>
            <person name="DasSarma S."/>
        </authorList>
    </citation>
    <scope>NUCLEOTIDE SEQUENCE [LARGE SCALE GENOMIC DNA]</scope>
    <source>
        <strain>ATCC 700922 / JCM 11081 / NRC-1</strain>
    </source>
</reference>
<evidence type="ECO:0000255" key="1">
    <source>
        <dbReference type="HAMAP-Rule" id="MF_01659"/>
    </source>
</evidence>
<evidence type="ECO:0000256" key="2">
    <source>
        <dbReference type="SAM" id="MobiDB-lite"/>
    </source>
</evidence>
<sequence>MTAPNRNTLWARAIADELAAAGVHAVCVCPGSRSTPLTVAVDAHDDLTVYSHLDERSAAFFALGRGKRTGAPTAVLTTSGTATANLHPAVMEAAQARIPLVVLTADRPPELRGSGANQTVDQEQLYGSAVRYYEDLPEPEVTARKLRSLRTSVCRAVGHTTGPKPGPVHLNVPFRKPLEPVSVPGDVPPSFDDDHPLAAAGRGGDTPFVSVHDGTTEPAGETAAALAAAATTAARPLVVAGPADGGAGITPDAAAALADATGAPIFADPLSGLRFGPHVGDAPVVGGYDGFLAADVPHPEFVLRFGASPTSKPLRKWLAASDARQVVVDPAGGWREAEFTATDVVAADPAATARAIAARADGTRSAWTDAVLDLEARYWAAVDDFQPAATLEGEIAATVAAGAPDPATVFVSNSMPIRDFDRFAAPRGADLAVLGNRGASGIDGVVSSALGAGSATADPVVGLVGDLAYFHDSNGLLALERCGVDATIVLVNNDGGSIFHMLPIEQFDPPFTGQFKTPHGLDFAPTADTYALSFARTDTVGEFRAAYRAALGDAGTHVIEVSTDAEASHRERERLADRVTGLSV</sequence>
<protein>
    <recommendedName>
        <fullName evidence="1">2-succinyl-5-enolpyruvyl-6-hydroxy-3-cyclohexene-1-carboxylate synthase</fullName>
        <shortName evidence="1">SEPHCHC synthase</shortName>
        <ecNumber evidence="1">2.2.1.9</ecNumber>
    </recommendedName>
    <alternativeName>
        <fullName evidence="1">Menaquinone biosynthesis protein MenD</fullName>
    </alternativeName>
</protein>
<comment type="function">
    <text evidence="1">Catalyzes the thiamine diphosphate-dependent decarboxylation of 2-oxoglutarate and the subsequent addition of the resulting succinic semialdehyde-thiamine pyrophosphate anion to isochorismate to yield 2-succinyl-5-enolpyruvyl-6-hydroxy-3-cyclohexene-1-carboxylate (SEPHCHC).</text>
</comment>
<comment type="catalytic activity">
    <reaction evidence="1">
        <text>isochorismate + 2-oxoglutarate + H(+) = 5-enolpyruvoyl-6-hydroxy-2-succinyl-cyclohex-3-ene-1-carboxylate + CO2</text>
        <dbReference type="Rhea" id="RHEA:25593"/>
        <dbReference type="ChEBI" id="CHEBI:15378"/>
        <dbReference type="ChEBI" id="CHEBI:16526"/>
        <dbReference type="ChEBI" id="CHEBI:16810"/>
        <dbReference type="ChEBI" id="CHEBI:29780"/>
        <dbReference type="ChEBI" id="CHEBI:58818"/>
        <dbReference type="EC" id="2.2.1.9"/>
    </reaction>
</comment>
<comment type="cofactor">
    <cofactor evidence="1">
        <name>Mg(2+)</name>
        <dbReference type="ChEBI" id="CHEBI:18420"/>
    </cofactor>
    <cofactor evidence="1">
        <name>Mn(2+)</name>
        <dbReference type="ChEBI" id="CHEBI:29035"/>
    </cofactor>
</comment>
<comment type="cofactor">
    <cofactor evidence="1">
        <name>thiamine diphosphate</name>
        <dbReference type="ChEBI" id="CHEBI:58937"/>
    </cofactor>
    <text evidence="1">Binds 1 thiamine pyrophosphate per subunit.</text>
</comment>
<comment type="pathway">
    <text evidence="1">Quinol/quinone metabolism; 1,4-dihydroxy-2-naphthoate biosynthesis; 1,4-dihydroxy-2-naphthoate from chorismate: step 2/7.</text>
</comment>
<comment type="pathway">
    <text evidence="1">Quinol/quinone metabolism; menaquinone biosynthesis.</text>
</comment>
<comment type="subunit">
    <text evidence="1">Homodimer.</text>
</comment>
<comment type="similarity">
    <text evidence="1">Belongs to the TPP enzyme family. MenD subfamily.</text>
</comment>
<accession>Q9HQN3</accession>
<name>MEND_HALSA</name>
<dbReference type="EC" id="2.2.1.9" evidence="1"/>
<dbReference type="EMBL" id="AE004437">
    <property type="protein sequence ID" value="AAG19480.1"/>
    <property type="molecule type" value="Genomic_DNA"/>
</dbReference>
<dbReference type="PIR" id="D84264">
    <property type="entry name" value="D84264"/>
</dbReference>
<dbReference type="RefSeq" id="WP_010902775.1">
    <property type="nucleotide sequence ID" value="NC_002607.1"/>
</dbReference>
<dbReference type="SMR" id="Q9HQN3"/>
<dbReference type="STRING" id="64091.VNG_1081G"/>
<dbReference type="PaxDb" id="64091-VNG_1081G"/>
<dbReference type="GeneID" id="68693871"/>
<dbReference type="KEGG" id="hal:VNG_1081G"/>
<dbReference type="PATRIC" id="fig|64091.14.peg.825"/>
<dbReference type="HOGENOM" id="CLU_006051_3_0_2"/>
<dbReference type="InParanoid" id="Q9HQN3"/>
<dbReference type="OrthoDB" id="212847at2157"/>
<dbReference type="PhylomeDB" id="Q9HQN3"/>
<dbReference type="UniPathway" id="UPA00079"/>
<dbReference type="UniPathway" id="UPA01057">
    <property type="reaction ID" value="UER00164"/>
</dbReference>
<dbReference type="Proteomes" id="UP000000554">
    <property type="component" value="Chromosome"/>
</dbReference>
<dbReference type="GO" id="GO:0070204">
    <property type="term" value="F:2-succinyl-5-enolpyruvyl-6-hydroxy-3-cyclohexene-1-carboxylic-acid synthase activity"/>
    <property type="evidence" value="ECO:0007669"/>
    <property type="project" value="UniProtKB-UniRule"/>
</dbReference>
<dbReference type="GO" id="GO:0000287">
    <property type="term" value="F:magnesium ion binding"/>
    <property type="evidence" value="ECO:0007669"/>
    <property type="project" value="UniProtKB-UniRule"/>
</dbReference>
<dbReference type="GO" id="GO:0030145">
    <property type="term" value="F:manganese ion binding"/>
    <property type="evidence" value="ECO:0007669"/>
    <property type="project" value="UniProtKB-UniRule"/>
</dbReference>
<dbReference type="GO" id="GO:0030976">
    <property type="term" value="F:thiamine pyrophosphate binding"/>
    <property type="evidence" value="ECO:0007669"/>
    <property type="project" value="UniProtKB-UniRule"/>
</dbReference>
<dbReference type="GO" id="GO:0009234">
    <property type="term" value="P:menaquinone biosynthetic process"/>
    <property type="evidence" value="ECO:0007669"/>
    <property type="project" value="UniProtKB-UniRule"/>
</dbReference>
<dbReference type="GO" id="GO:0006082">
    <property type="term" value="P:organic acid metabolic process"/>
    <property type="evidence" value="ECO:0007669"/>
    <property type="project" value="UniProtKB-ARBA"/>
</dbReference>
<dbReference type="GO" id="GO:0044272">
    <property type="term" value="P:sulfur compound biosynthetic process"/>
    <property type="evidence" value="ECO:0007669"/>
    <property type="project" value="UniProtKB-ARBA"/>
</dbReference>
<dbReference type="CDD" id="cd07037">
    <property type="entry name" value="TPP_PYR_MenD"/>
    <property type="match status" value="1"/>
</dbReference>
<dbReference type="CDD" id="cd02009">
    <property type="entry name" value="TPP_SHCHC_synthase"/>
    <property type="match status" value="1"/>
</dbReference>
<dbReference type="Gene3D" id="3.40.50.970">
    <property type="match status" value="2"/>
</dbReference>
<dbReference type="Gene3D" id="3.40.50.1220">
    <property type="entry name" value="TPP-binding domain"/>
    <property type="match status" value="1"/>
</dbReference>
<dbReference type="HAMAP" id="MF_01659">
    <property type="entry name" value="MenD"/>
    <property type="match status" value="1"/>
</dbReference>
<dbReference type="InterPro" id="IPR029035">
    <property type="entry name" value="DHS-like_NAD/FAD-binding_dom"/>
</dbReference>
<dbReference type="InterPro" id="IPR004433">
    <property type="entry name" value="MenaQ_synth_MenD"/>
</dbReference>
<dbReference type="InterPro" id="IPR029061">
    <property type="entry name" value="THDP-binding"/>
</dbReference>
<dbReference type="InterPro" id="IPR012001">
    <property type="entry name" value="Thiamin_PyroP_enz_TPP-bd_dom"/>
</dbReference>
<dbReference type="InterPro" id="IPR011766">
    <property type="entry name" value="TPP_enzyme_TPP-bd"/>
</dbReference>
<dbReference type="NCBIfam" id="TIGR00173">
    <property type="entry name" value="menD"/>
    <property type="match status" value="1"/>
</dbReference>
<dbReference type="PANTHER" id="PTHR42916">
    <property type="entry name" value="2-SUCCINYL-5-ENOLPYRUVYL-6-HYDROXY-3-CYCLOHEXENE-1-CARBOXYLATE SYNTHASE"/>
    <property type="match status" value="1"/>
</dbReference>
<dbReference type="PANTHER" id="PTHR42916:SF1">
    <property type="entry name" value="PROTEIN PHYLLO, CHLOROPLASTIC"/>
    <property type="match status" value="1"/>
</dbReference>
<dbReference type="Pfam" id="PF02775">
    <property type="entry name" value="TPP_enzyme_C"/>
    <property type="match status" value="1"/>
</dbReference>
<dbReference type="Pfam" id="PF02776">
    <property type="entry name" value="TPP_enzyme_N"/>
    <property type="match status" value="1"/>
</dbReference>
<dbReference type="PIRSF" id="PIRSF004983">
    <property type="entry name" value="MenD"/>
    <property type="match status" value="1"/>
</dbReference>
<dbReference type="SUPFAM" id="SSF52467">
    <property type="entry name" value="DHS-like NAD/FAD-binding domain"/>
    <property type="match status" value="1"/>
</dbReference>
<dbReference type="SUPFAM" id="SSF52518">
    <property type="entry name" value="Thiamin diphosphate-binding fold (THDP-binding)"/>
    <property type="match status" value="2"/>
</dbReference>
<keyword id="KW-0460">Magnesium</keyword>
<keyword id="KW-0464">Manganese</keyword>
<keyword id="KW-0474">Menaquinone biosynthesis</keyword>
<keyword id="KW-0479">Metal-binding</keyword>
<keyword id="KW-1185">Reference proteome</keyword>
<keyword id="KW-0786">Thiamine pyrophosphate</keyword>
<keyword id="KW-0808">Transferase</keyword>
<feature type="chain" id="PRO_0000341897" description="2-succinyl-5-enolpyruvyl-6-hydroxy-3-cyclohexene-1-carboxylate synthase">
    <location>
        <begin position="1"/>
        <end position="584"/>
    </location>
</feature>
<feature type="region of interest" description="Disordered" evidence="2">
    <location>
        <begin position="563"/>
        <end position="584"/>
    </location>
</feature>
<feature type="compositionally biased region" description="Basic and acidic residues" evidence="2">
    <location>
        <begin position="566"/>
        <end position="577"/>
    </location>
</feature>
<organism>
    <name type="scientific">Halobacterium salinarum (strain ATCC 700922 / JCM 11081 / NRC-1)</name>
    <name type="common">Halobacterium halobium</name>
    <dbReference type="NCBI Taxonomy" id="64091"/>
    <lineage>
        <taxon>Archaea</taxon>
        <taxon>Methanobacteriati</taxon>
        <taxon>Methanobacteriota</taxon>
        <taxon>Stenosarchaea group</taxon>
        <taxon>Halobacteria</taxon>
        <taxon>Halobacteriales</taxon>
        <taxon>Halobacteriaceae</taxon>
        <taxon>Halobacterium</taxon>
        <taxon>Halobacterium salinarum NRC-34001</taxon>
    </lineage>
</organism>
<gene>
    <name evidence="1" type="primary">menD</name>
    <name type="ordered locus">VNG_1081G</name>
</gene>
<proteinExistence type="inferred from homology"/>